<accession>Q9PWM3</accession>
<accession>A2BE61</accession>
<accession>O57367</accession>
<accession>Q4PR91</accession>
<accession>Q561X5</accession>
<comment type="function">
    <text evidence="1">Sequence-specific transcription factor which is part of a developmental regulatory system that provides cells with specific positional identities on the anterior-posterior axis.</text>
</comment>
<comment type="subcellular location">
    <subcellularLocation>
        <location evidence="2">Nucleus</location>
    </subcellularLocation>
</comment>
<comment type="developmental stage">
    <text evidence="4">At the 10-somite stage, barely expressed in the paraxial mesoderm. At the 20-somite stage, expressed in the developing CNS with an anterior expression limit within rhombomere 7.</text>
</comment>
<comment type="similarity">
    <text evidence="5">Belongs to the Antp homeobox family. Deformed subfamily.</text>
</comment>
<keyword id="KW-0217">Developmental protein</keyword>
<keyword id="KW-0238">DNA-binding</keyword>
<keyword id="KW-0371">Homeobox</keyword>
<keyword id="KW-0539">Nucleus</keyword>
<keyword id="KW-1185">Reference proteome</keyword>
<keyword id="KW-0804">Transcription</keyword>
<keyword id="KW-0805">Transcription regulation</keyword>
<name>HXC4A_DANRE</name>
<gene>
    <name type="primary">hoxc4a</name>
    <name type="synonym">hoxc4</name>
    <name type="ORF">si:dkey-81p22.8</name>
    <name type="ORF">zgc:110513</name>
</gene>
<proteinExistence type="evidence at transcript level"/>
<sequence>MIMSSYLMDSNYIDPKFPPCEEYSQNSYIPEHSPEYYSRARDSGYQHHHQELYPPRASYQERQYNCASIPEPDTQRGHGLPHAGHLLGKGQSASCEPPPLPLSPATPSAASSACNQATPEHPNSSASAKQPVVYPWMKKIHVSTVNSSYNGAEPKRSRTAYTRQQVLELEKEFHYNRYLTRRRRIEIAHSLVLSERQIKIWFQNRRMKWKKDHRLPNTKVRSSSSTGISSGSNTSSAAGVVAAASTTNTMSASEDLSGTERGEDITRL</sequence>
<reference key="1">
    <citation type="journal article" date="1998" name="Science">
        <title>Zebrafish hox clusters and vertebrate genome evolution.</title>
        <authorList>
            <person name="Amores A."/>
            <person name="Force A."/>
            <person name="Yan Y.-L."/>
            <person name="Joly L."/>
            <person name="Amemiya C."/>
            <person name="Fritz A."/>
            <person name="Ho R.K."/>
            <person name="Langeland J."/>
            <person name="Prince V.E."/>
            <person name="Wang Y.-L."/>
            <person name="Westerfield M."/>
            <person name="Ekker M."/>
            <person name="Postlethwait J.H."/>
        </authorList>
    </citation>
    <scope>NUCLEOTIDE SEQUENCE [GENOMIC DNA]</scope>
</reference>
<reference key="2">
    <citation type="journal article" date="2013" name="Nature">
        <title>The zebrafish reference genome sequence and its relationship to the human genome.</title>
        <authorList>
            <person name="Howe K."/>
            <person name="Clark M.D."/>
            <person name="Torroja C.F."/>
            <person name="Torrance J."/>
            <person name="Berthelot C."/>
            <person name="Muffato M."/>
            <person name="Collins J.E."/>
            <person name="Humphray S."/>
            <person name="McLaren K."/>
            <person name="Matthews L."/>
            <person name="McLaren S."/>
            <person name="Sealy I."/>
            <person name="Caccamo M."/>
            <person name="Churcher C."/>
            <person name="Scott C."/>
            <person name="Barrett J.C."/>
            <person name="Koch R."/>
            <person name="Rauch G.J."/>
            <person name="White S."/>
            <person name="Chow W."/>
            <person name="Kilian B."/>
            <person name="Quintais L.T."/>
            <person name="Guerra-Assuncao J.A."/>
            <person name="Zhou Y."/>
            <person name="Gu Y."/>
            <person name="Yen J."/>
            <person name="Vogel J.H."/>
            <person name="Eyre T."/>
            <person name="Redmond S."/>
            <person name="Banerjee R."/>
            <person name="Chi J."/>
            <person name="Fu B."/>
            <person name="Langley E."/>
            <person name="Maguire S.F."/>
            <person name="Laird G.K."/>
            <person name="Lloyd D."/>
            <person name="Kenyon E."/>
            <person name="Donaldson S."/>
            <person name="Sehra H."/>
            <person name="Almeida-King J."/>
            <person name="Loveland J."/>
            <person name="Trevanion S."/>
            <person name="Jones M."/>
            <person name="Quail M."/>
            <person name="Willey D."/>
            <person name="Hunt A."/>
            <person name="Burton J."/>
            <person name="Sims S."/>
            <person name="McLay K."/>
            <person name="Plumb B."/>
            <person name="Davis J."/>
            <person name="Clee C."/>
            <person name="Oliver K."/>
            <person name="Clark R."/>
            <person name="Riddle C."/>
            <person name="Elliot D."/>
            <person name="Threadgold G."/>
            <person name="Harden G."/>
            <person name="Ware D."/>
            <person name="Begum S."/>
            <person name="Mortimore B."/>
            <person name="Kerry G."/>
            <person name="Heath P."/>
            <person name="Phillimore B."/>
            <person name="Tracey A."/>
            <person name="Corby N."/>
            <person name="Dunn M."/>
            <person name="Johnson C."/>
            <person name="Wood J."/>
            <person name="Clark S."/>
            <person name="Pelan S."/>
            <person name="Griffiths G."/>
            <person name="Smith M."/>
            <person name="Glithero R."/>
            <person name="Howden P."/>
            <person name="Barker N."/>
            <person name="Lloyd C."/>
            <person name="Stevens C."/>
            <person name="Harley J."/>
            <person name="Holt K."/>
            <person name="Panagiotidis G."/>
            <person name="Lovell J."/>
            <person name="Beasley H."/>
            <person name="Henderson C."/>
            <person name="Gordon D."/>
            <person name="Auger K."/>
            <person name="Wright D."/>
            <person name="Collins J."/>
            <person name="Raisen C."/>
            <person name="Dyer L."/>
            <person name="Leung K."/>
            <person name="Robertson L."/>
            <person name="Ambridge K."/>
            <person name="Leongamornlert D."/>
            <person name="McGuire S."/>
            <person name="Gilderthorp R."/>
            <person name="Griffiths C."/>
            <person name="Manthravadi D."/>
            <person name="Nichol S."/>
            <person name="Barker G."/>
            <person name="Whitehead S."/>
            <person name="Kay M."/>
            <person name="Brown J."/>
            <person name="Murnane C."/>
            <person name="Gray E."/>
            <person name="Humphries M."/>
            <person name="Sycamore N."/>
            <person name="Barker D."/>
            <person name="Saunders D."/>
            <person name="Wallis J."/>
            <person name="Babbage A."/>
            <person name="Hammond S."/>
            <person name="Mashreghi-Mohammadi M."/>
            <person name="Barr L."/>
            <person name="Martin S."/>
            <person name="Wray P."/>
            <person name="Ellington A."/>
            <person name="Matthews N."/>
            <person name="Ellwood M."/>
            <person name="Woodmansey R."/>
            <person name="Clark G."/>
            <person name="Cooper J."/>
            <person name="Tromans A."/>
            <person name="Grafham D."/>
            <person name="Skuce C."/>
            <person name="Pandian R."/>
            <person name="Andrews R."/>
            <person name="Harrison E."/>
            <person name="Kimberley A."/>
            <person name="Garnett J."/>
            <person name="Fosker N."/>
            <person name="Hall R."/>
            <person name="Garner P."/>
            <person name="Kelly D."/>
            <person name="Bird C."/>
            <person name="Palmer S."/>
            <person name="Gehring I."/>
            <person name="Berger A."/>
            <person name="Dooley C.M."/>
            <person name="Ersan-Urun Z."/>
            <person name="Eser C."/>
            <person name="Geiger H."/>
            <person name="Geisler M."/>
            <person name="Karotki L."/>
            <person name="Kirn A."/>
            <person name="Konantz J."/>
            <person name="Konantz M."/>
            <person name="Oberlander M."/>
            <person name="Rudolph-Geiger S."/>
            <person name="Teucke M."/>
            <person name="Lanz C."/>
            <person name="Raddatz G."/>
            <person name="Osoegawa K."/>
            <person name="Zhu B."/>
            <person name="Rapp A."/>
            <person name="Widaa S."/>
            <person name="Langford C."/>
            <person name="Yang F."/>
            <person name="Schuster S.C."/>
            <person name="Carter N.P."/>
            <person name="Harrow J."/>
            <person name="Ning Z."/>
            <person name="Herrero J."/>
            <person name="Searle S.M."/>
            <person name="Enright A."/>
            <person name="Geisler R."/>
            <person name="Plasterk R.H."/>
            <person name="Lee C."/>
            <person name="Westerfield M."/>
            <person name="de Jong P.J."/>
            <person name="Zon L.I."/>
            <person name="Postlethwait J.H."/>
            <person name="Nusslein-Volhard C."/>
            <person name="Hubbard T.J."/>
            <person name="Roest Crollius H."/>
            <person name="Rogers J."/>
            <person name="Stemple D.L."/>
        </authorList>
    </citation>
    <scope>NUCLEOTIDE SEQUENCE [LARGE SCALE GENOMIC DNA]</scope>
    <source>
        <strain>Tuebingen</strain>
    </source>
</reference>
<reference key="3">
    <citation type="submission" date="2005-04" db="EMBL/GenBank/DDBJ databases">
        <authorList>
            <consortium name="NIH - Zebrafish Gene Collection (ZGC) project"/>
        </authorList>
    </citation>
    <scope>NUCLEOTIDE SEQUENCE [LARGE SCALE MRNA]</scope>
    <source>
        <tissue>Embryo</tissue>
    </source>
</reference>
<reference key="4">
    <citation type="journal article" date="2005" name="Evol. Dev.">
        <title>Genomic annotation and transcriptome analysis of the zebrafish (Danio rerio) hox complex with description of a novel member, hoxb13a.</title>
        <authorList>
            <person name="Corredor-Adamez M."/>
            <person name="Welten M.C.M."/>
            <person name="Spaink H.P."/>
            <person name="Jeffery J.E."/>
            <person name="Schoon R.T."/>
            <person name="de Bakker M.A.G."/>
            <person name="Bagowski C.P."/>
            <person name="Meijer A.H."/>
            <person name="Verbeek F.J."/>
            <person name="Richardson M.K."/>
        </authorList>
    </citation>
    <scope>NUCLEOTIDE SEQUENCE [MRNA] OF 74-154</scope>
    <source>
        <strain>Tuebingen</strain>
    </source>
</reference>
<reference key="5">
    <citation type="journal article" date="1998" name="Development">
        <title>Zebrafish hox genes: genomic organization and modified colinear expression patterns in the trunk.</title>
        <authorList>
            <person name="Prince V.E."/>
            <person name="Joly L."/>
            <person name="Ekker M."/>
            <person name="Ho R.K."/>
        </authorList>
    </citation>
    <scope>NUCLEOTIDE SEQUENCE [MRNA] OF 195-268</scope>
    <scope>DEVELOPMENTAL STAGE</scope>
    <source>
        <tissue>Embryo</tissue>
    </source>
</reference>
<protein>
    <recommendedName>
        <fullName>Homeobox protein Hox-C4a</fullName>
        <shortName>Hox-C4</shortName>
    </recommendedName>
</protein>
<evidence type="ECO:0000250" key="1"/>
<evidence type="ECO:0000255" key="2">
    <source>
        <dbReference type="PROSITE-ProRule" id="PRU00108"/>
    </source>
</evidence>
<evidence type="ECO:0000256" key="3">
    <source>
        <dbReference type="SAM" id="MobiDB-lite"/>
    </source>
</evidence>
<evidence type="ECO:0000269" key="4">
    <source>
    </source>
</evidence>
<evidence type="ECO:0000305" key="5"/>
<dbReference type="EMBL" id="AF071264">
    <property type="protein sequence ID" value="AAD15957.1"/>
    <property type="molecule type" value="Genomic_DNA"/>
</dbReference>
<dbReference type="EMBL" id="BX005254">
    <property type="protein sequence ID" value="CAM16415.1"/>
    <property type="molecule type" value="Genomic_DNA"/>
</dbReference>
<dbReference type="EMBL" id="BC092923">
    <property type="protein sequence ID" value="AAH92923.1"/>
    <property type="molecule type" value="mRNA"/>
</dbReference>
<dbReference type="EMBL" id="DQ060552">
    <property type="protein sequence ID" value="AAY67930.1"/>
    <property type="molecule type" value="mRNA"/>
</dbReference>
<dbReference type="EMBL" id="Y14545">
    <property type="protein sequence ID" value="CAA74880.1"/>
    <property type="molecule type" value="mRNA"/>
</dbReference>
<dbReference type="RefSeq" id="NP_571197.1">
    <property type="nucleotide sequence ID" value="NM_131122.2"/>
</dbReference>
<dbReference type="SMR" id="Q9PWM3"/>
<dbReference type="FunCoup" id="Q9PWM3">
    <property type="interactions" value="424"/>
</dbReference>
<dbReference type="STRING" id="7955.ENSDARP00000093906"/>
<dbReference type="PaxDb" id="7955-ENSDARP00000093906"/>
<dbReference type="Ensembl" id="ENSDART00000103132">
    <property type="protein sequence ID" value="ENSDARP00000093906"/>
    <property type="gene ID" value="ENSDARG00000070338"/>
</dbReference>
<dbReference type="GeneID" id="30345"/>
<dbReference type="KEGG" id="dre:30345"/>
<dbReference type="AGR" id="ZFIN:ZDB-GENE-990415-112"/>
<dbReference type="CTD" id="30345"/>
<dbReference type="ZFIN" id="ZDB-GENE-990415-112">
    <property type="gene designation" value="hoxc4a"/>
</dbReference>
<dbReference type="eggNOG" id="KOG0489">
    <property type="taxonomic scope" value="Eukaryota"/>
</dbReference>
<dbReference type="HOGENOM" id="CLU_061398_0_0_1"/>
<dbReference type="InParanoid" id="Q9PWM3"/>
<dbReference type="OMA" id="QDRQYNC"/>
<dbReference type="OrthoDB" id="6159439at2759"/>
<dbReference type="PhylomeDB" id="Q9PWM3"/>
<dbReference type="TreeFam" id="TF352857"/>
<dbReference type="PRO" id="PR:Q9PWM3"/>
<dbReference type="Proteomes" id="UP000000437">
    <property type="component" value="Chromosome 23"/>
</dbReference>
<dbReference type="Bgee" id="ENSDARG00000070338">
    <property type="expression patterns" value="Expressed in spinal cord and 15 other cell types or tissues"/>
</dbReference>
<dbReference type="ExpressionAtlas" id="Q9PWM3">
    <property type="expression patterns" value="baseline"/>
</dbReference>
<dbReference type="GO" id="GO:0005654">
    <property type="term" value="C:nucleoplasm"/>
    <property type="evidence" value="ECO:0000318"/>
    <property type="project" value="GO_Central"/>
</dbReference>
<dbReference type="GO" id="GO:0000981">
    <property type="term" value="F:DNA-binding transcription factor activity, RNA polymerase II-specific"/>
    <property type="evidence" value="ECO:0000318"/>
    <property type="project" value="GO_Central"/>
</dbReference>
<dbReference type="GO" id="GO:0000978">
    <property type="term" value="F:RNA polymerase II cis-regulatory region sequence-specific DNA binding"/>
    <property type="evidence" value="ECO:0000318"/>
    <property type="project" value="GO_Central"/>
</dbReference>
<dbReference type="GO" id="GO:0009952">
    <property type="term" value="P:anterior/posterior pattern specification"/>
    <property type="evidence" value="ECO:0000318"/>
    <property type="project" value="GO_Central"/>
</dbReference>
<dbReference type="GO" id="GO:0048704">
    <property type="term" value="P:embryonic skeletal system morphogenesis"/>
    <property type="evidence" value="ECO:0000318"/>
    <property type="project" value="GO_Central"/>
</dbReference>
<dbReference type="GO" id="GO:0045944">
    <property type="term" value="P:positive regulation of transcription by RNA polymerase II"/>
    <property type="evidence" value="ECO:0000318"/>
    <property type="project" value="GO_Central"/>
</dbReference>
<dbReference type="CDD" id="cd00086">
    <property type="entry name" value="homeodomain"/>
    <property type="match status" value="1"/>
</dbReference>
<dbReference type="FunFam" id="1.10.10.60:FF:000029">
    <property type="entry name" value="Homeobox protein Hox-D4"/>
    <property type="match status" value="1"/>
</dbReference>
<dbReference type="Gene3D" id="1.10.10.60">
    <property type="entry name" value="Homeodomain-like"/>
    <property type="match status" value="1"/>
</dbReference>
<dbReference type="InterPro" id="IPR050609">
    <property type="entry name" value="Antp_homeobox_Deformed_sf"/>
</dbReference>
<dbReference type="InterPro" id="IPR001356">
    <property type="entry name" value="HD"/>
</dbReference>
<dbReference type="InterPro" id="IPR020479">
    <property type="entry name" value="HD_metazoa"/>
</dbReference>
<dbReference type="InterPro" id="IPR017995">
    <property type="entry name" value="Homeobox_antennapedia"/>
</dbReference>
<dbReference type="InterPro" id="IPR001827">
    <property type="entry name" value="Homeobox_Antennapedia_CS"/>
</dbReference>
<dbReference type="InterPro" id="IPR017970">
    <property type="entry name" value="Homeobox_CS"/>
</dbReference>
<dbReference type="InterPro" id="IPR009057">
    <property type="entry name" value="Homeodomain-like_sf"/>
</dbReference>
<dbReference type="PANTHER" id="PTHR45771:SF9">
    <property type="entry name" value="HOMEOBOX PROTEIN HOX-C4"/>
    <property type="match status" value="1"/>
</dbReference>
<dbReference type="PANTHER" id="PTHR45771">
    <property type="entry name" value="HOMEOTIC PROTEIN DEFORMED"/>
    <property type="match status" value="1"/>
</dbReference>
<dbReference type="Pfam" id="PF00046">
    <property type="entry name" value="Homeodomain"/>
    <property type="match status" value="1"/>
</dbReference>
<dbReference type="PRINTS" id="PR00025">
    <property type="entry name" value="ANTENNAPEDIA"/>
</dbReference>
<dbReference type="PRINTS" id="PR00024">
    <property type="entry name" value="HOMEOBOX"/>
</dbReference>
<dbReference type="SMART" id="SM00389">
    <property type="entry name" value="HOX"/>
    <property type="match status" value="1"/>
</dbReference>
<dbReference type="SUPFAM" id="SSF46689">
    <property type="entry name" value="Homeodomain-like"/>
    <property type="match status" value="1"/>
</dbReference>
<dbReference type="PROSITE" id="PS00032">
    <property type="entry name" value="ANTENNAPEDIA"/>
    <property type="match status" value="1"/>
</dbReference>
<dbReference type="PROSITE" id="PS00027">
    <property type="entry name" value="HOMEOBOX_1"/>
    <property type="match status" value="1"/>
</dbReference>
<dbReference type="PROSITE" id="PS50071">
    <property type="entry name" value="HOMEOBOX_2"/>
    <property type="match status" value="1"/>
</dbReference>
<organism>
    <name type="scientific">Danio rerio</name>
    <name type="common">Zebrafish</name>
    <name type="synonym">Brachydanio rerio</name>
    <dbReference type="NCBI Taxonomy" id="7955"/>
    <lineage>
        <taxon>Eukaryota</taxon>
        <taxon>Metazoa</taxon>
        <taxon>Chordata</taxon>
        <taxon>Craniata</taxon>
        <taxon>Vertebrata</taxon>
        <taxon>Euteleostomi</taxon>
        <taxon>Actinopterygii</taxon>
        <taxon>Neopterygii</taxon>
        <taxon>Teleostei</taxon>
        <taxon>Ostariophysi</taxon>
        <taxon>Cypriniformes</taxon>
        <taxon>Danionidae</taxon>
        <taxon>Danioninae</taxon>
        <taxon>Danio</taxon>
    </lineage>
</organism>
<feature type="chain" id="PRO_0000200167" description="Homeobox protein Hox-C4a">
    <location>
        <begin position="1"/>
        <end position="268"/>
    </location>
</feature>
<feature type="DNA-binding region" description="Homeobox" evidence="2">
    <location>
        <begin position="154"/>
        <end position="213"/>
    </location>
</feature>
<feature type="region of interest" description="Disordered" evidence="3">
    <location>
        <begin position="70"/>
        <end position="129"/>
    </location>
</feature>
<feature type="region of interest" description="Disordered" evidence="3">
    <location>
        <begin position="212"/>
        <end position="268"/>
    </location>
</feature>
<feature type="short sequence motif" description="Antp-type hexapeptide">
    <location>
        <begin position="133"/>
        <end position="138"/>
    </location>
</feature>
<feature type="compositionally biased region" description="Low complexity" evidence="3">
    <location>
        <begin position="77"/>
        <end position="95"/>
    </location>
</feature>
<feature type="compositionally biased region" description="Low complexity" evidence="3">
    <location>
        <begin position="105"/>
        <end position="114"/>
    </location>
</feature>
<feature type="compositionally biased region" description="Polar residues" evidence="3">
    <location>
        <begin position="115"/>
        <end position="128"/>
    </location>
</feature>
<feature type="compositionally biased region" description="Low complexity" evidence="3">
    <location>
        <begin position="222"/>
        <end position="253"/>
    </location>
</feature>
<feature type="compositionally biased region" description="Basic and acidic residues" evidence="3">
    <location>
        <begin position="258"/>
        <end position="268"/>
    </location>
</feature>